<proteinExistence type="evidence at transcript level"/>
<keyword id="KW-0158">Chromosome</keyword>
<keyword id="KW-0217">Developmental protein</keyword>
<keyword id="KW-0221">Differentiation</keyword>
<keyword id="KW-0226">DNA condensation</keyword>
<keyword id="KW-0238">DNA-binding</keyword>
<keyword id="KW-0544">Nucleosome core</keyword>
<keyword id="KW-0539">Nucleus</keyword>
<keyword id="KW-0744">Spermatogenesis</keyword>
<sequence>MARYRRHSRSRSRSRYRRRRRRRSRHHNRRRTYRRSRRHSRRRRGRRRGYSRRRYSRRGRRRY</sequence>
<evidence type="ECO:0000250" key="1"/>
<evidence type="ECO:0000256" key="2">
    <source>
        <dbReference type="SAM" id="MobiDB-lite"/>
    </source>
</evidence>
<evidence type="ECO:0000305" key="3"/>
<comment type="function">
    <text evidence="1">Protamines substitute for histones in the chromatin of sperm during the haploid phase of spermatogenesis. They compact sperm DNA into a highly condensed, stable and inactive complex (By similarity).</text>
</comment>
<comment type="subcellular location">
    <subcellularLocation>
        <location evidence="1">Nucleus</location>
    </subcellularLocation>
    <subcellularLocation>
        <location evidence="1">Chromosome</location>
    </subcellularLocation>
</comment>
<comment type="tissue specificity">
    <text>Testis.</text>
</comment>
<comment type="similarity">
    <text evidence="3">Belongs to the protamine P1 family.</text>
</comment>
<accession>Q71V17</accession>
<dbReference type="EMBL" id="AF038296">
    <property type="protein sequence ID" value="AAC15623.1"/>
    <property type="molecule type" value="Genomic_DNA"/>
</dbReference>
<dbReference type="GO" id="GO:0000786">
    <property type="term" value="C:nucleosome"/>
    <property type="evidence" value="ECO:0007669"/>
    <property type="project" value="UniProtKB-KW"/>
</dbReference>
<dbReference type="GO" id="GO:0005634">
    <property type="term" value="C:nucleus"/>
    <property type="evidence" value="ECO:0007669"/>
    <property type="project" value="UniProtKB-SubCell"/>
</dbReference>
<dbReference type="GO" id="GO:0003677">
    <property type="term" value="F:DNA binding"/>
    <property type="evidence" value="ECO:0007669"/>
    <property type="project" value="UniProtKB-KW"/>
</dbReference>
<dbReference type="GO" id="GO:0030261">
    <property type="term" value="P:chromosome condensation"/>
    <property type="evidence" value="ECO:0007669"/>
    <property type="project" value="UniProtKB-KW"/>
</dbReference>
<dbReference type="GO" id="GO:0035092">
    <property type="term" value="P:sperm DNA condensation"/>
    <property type="evidence" value="ECO:0007669"/>
    <property type="project" value="InterPro"/>
</dbReference>
<dbReference type="InterPro" id="IPR000221">
    <property type="entry name" value="Protamine_P1"/>
</dbReference>
<dbReference type="PROSITE" id="PS00048">
    <property type="entry name" value="PROTAMINE_P1"/>
    <property type="match status" value="1"/>
</dbReference>
<gene>
    <name type="primary">PRM1</name>
</gene>
<reference key="1">
    <citation type="journal article" date="1998" name="J. Mammal.">
        <title>Phylogeny of the dasyurid marsupial genus Antechinus based on cytochrome-b, 12S-rRNA, and protamine-P1 genes.</title>
        <authorList>
            <person name="Armstrong L.A."/>
            <person name="Krajewski C."/>
            <person name="Westerman M."/>
        </authorList>
    </citation>
    <scope>NUCLEOTIDE SEQUENCE [GENOMIC DNA]</scope>
</reference>
<feature type="chain" id="PRO_0000191441" description="Sperm protamine P1">
    <location>
        <begin position="1"/>
        <end position="63"/>
    </location>
</feature>
<feature type="region of interest" description="Disordered" evidence="2">
    <location>
        <begin position="1"/>
        <end position="63"/>
    </location>
</feature>
<protein>
    <recommendedName>
        <fullName>Sperm protamine P1</fullName>
    </recommendedName>
</protein>
<organism>
    <name type="scientific">Antechinus godmani</name>
    <name type="common">Atherton antechinus</name>
    <dbReference type="NCBI Taxonomy" id="71385"/>
    <lineage>
        <taxon>Eukaryota</taxon>
        <taxon>Metazoa</taxon>
        <taxon>Chordata</taxon>
        <taxon>Craniata</taxon>
        <taxon>Vertebrata</taxon>
        <taxon>Euteleostomi</taxon>
        <taxon>Mammalia</taxon>
        <taxon>Metatheria</taxon>
        <taxon>Dasyuromorphia</taxon>
        <taxon>Dasyuridae</taxon>
        <taxon>Antechinus</taxon>
    </lineage>
</organism>
<name>HSP1_ANTGO</name>